<dbReference type="EMBL" id="BA000018">
    <property type="protein sequence ID" value="BAB42439.1"/>
    <property type="molecule type" value="Genomic_DNA"/>
</dbReference>
<dbReference type="PIR" id="C89910">
    <property type="entry name" value="C89910"/>
</dbReference>
<dbReference type="RefSeq" id="WP_000803135.1">
    <property type="nucleotide sequence ID" value="NC_002745.2"/>
</dbReference>
<dbReference type="SMR" id="Q7A5S6"/>
<dbReference type="EnsemblBacteria" id="BAB42439">
    <property type="protein sequence ID" value="BAB42439"/>
    <property type="gene ID" value="BAB42439"/>
</dbReference>
<dbReference type="KEGG" id="sau:SA1181"/>
<dbReference type="HOGENOM" id="CLU_004785_2_1_9"/>
<dbReference type="GO" id="GO:0005524">
    <property type="term" value="F:ATP binding"/>
    <property type="evidence" value="ECO:0007669"/>
    <property type="project" value="UniProtKB-KW"/>
</dbReference>
<dbReference type="GO" id="GO:0016887">
    <property type="term" value="F:ATP hydrolysis activity"/>
    <property type="evidence" value="ECO:0007669"/>
    <property type="project" value="InterPro"/>
</dbReference>
<dbReference type="GO" id="GO:0004519">
    <property type="term" value="F:endonuclease activity"/>
    <property type="evidence" value="ECO:0007669"/>
    <property type="project" value="UniProtKB-KW"/>
</dbReference>
<dbReference type="GO" id="GO:0004527">
    <property type="term" value="F:exonuclease activity"/>
    <property type="evidence" value="ECO:0007669"/>
    <property type="project" value="UniProtKB-KW"/>
</dbReference>
<dbReference type="GO" id="GO:0006310">
    <property type="term" value="P:DNA recombination"/>
    <property type="evidence" value="ECO:0007669"/>
    <property type="project" value="UniProtKB-KW"/>
</dbReference>
<dbReference type="GO" id="GO:0006260">
    <property type="term" value="P:DNA replication"/>
    <property type="evidence" value="ECO:0007669"/>
    <property type="project" value="UniProtKB-KW"/>
</dbReference>
<dbReference type="GO" id="GO:0006302">
    <property type="term" value="P:double-strand break repair"/>
    <property type="evidence" value="ECO:0007669"/>
    <property type="project" value="InterPro"/>
</dbReference>
<dbReference type="CDD" id="cd03279">
    <property type="entry name" value="ABC_sbcCD"/>
    <property type="match status" value="1"/>
</dbReference>
<dbReference type="Gene3D" id="3.40.50.300">
    <property type="entry name" value="P-loop containing nucleotide triphosphate hydrolases"/>
    <property type="match status" value="2"/>
</dbReference>
<dbReference type="InterPro" id="IPR027417">
    <property type="entry name" value="P-loop_NTPase"/>
</dbReference>
<dbReference type="InterPro" id="IPR038729">
    <property type="entry name" value="Rad50/SbcC_AAA"/>
</dbReference>
<dbReference type="InterPro" id="IPR053380">
    <property type="entry name" value="SbcCD_Nuclease_C"/>
</dbReference>
<dbReference type="NCBIfam" id="NF041751">
    <property type="entry name" value="sbcc_Staph"/>
    <property type="match status" value="1"/>
</dbReference>
<dbReference type="PANTHER" id="PTHR32114">
    <property type="entry name" value="ABC TRANSPORTER ABCH.3"/>
    <property type="match status" value="1"/>
</dbReference>
<dbReference type="PANTHER" id="PTHR32114:SF2">
    <property type="entry name" value="ABC TRANSPORTER ABCH.3"/>
    <property type="match status" value="1"/>
</dbReference>
<dbReference type="Pfam" id="PF13476">
    <property type="entry name" value="AAA_23"/>
    <property type="match status" value="1"/>
</dbReference>
<dbReference type="Pfam" id="PF13558">
    <property type="entry name" value="SbcC_Walker_B"/>
    <property type="match status" value="1"/>
</dbReference>
<dbReference type="SUPFAM" id="SSF52540">
    <property type="entry name" value="P-loop containing nucleoside triphosphate hydrolases"/>
    <property type="match status" value="2"/>
</dbReference>
<dbReference type="SUPFAM" id="SSF75712">
    <property type="entry name" value="Rad50 coiled-coil Zn hook"/>
    <property type="match status" value="1"/>
</dbReference>
<protein>
    <recommendedName>
        <fullName>Nuclease SbcCD subunit C</fullName>
    </recommendedName>
</protein>
<proteinExistence type="evidence at protein level"/>
<reference key="1">
    <citation type="journal article" date="2001" name="Lancet">
        <title>Whole genome sequencing of meticillin-resistant Staphylococcus aureus.</title>
        <authorList>
            <person name="Kuroda M."/>
            <person name="Ohta T."/>
            <person name="Uchiyama I."/>
            <person name="Baba T."/>
            <person name="Yuzawa H."/>
            <person name="Kobayashi I."/>
            <person name="Cui L."/>
            <person name="Oguchi A."/>
            <person name="Aoki K."/>
            <person name="Nagai Y."/>
            <person name="Lian J.-Q."/>
            <person name="Ito T."/>
            <person name="Kanamori M."/>
            <person name="Matsumaru H."/>
            <person name="Maruyama A."/>
            <person name="Murakami H."/>
            <person name="Hosoyama A."/>
            <person name="Mizutani-Ui Y."/>
            <person name="Takahashi N.K."/>
            <person name="Sawano T."/>
            <person name="Inoue R."/>
            <person name="Kaito C."/>
            <person name="Sekimizu K."/>
            <person name="Hirakawa H."/>
            <person name="Kuhara S."/>
            <person name="Goto S."/>
            <person name="Yabuzaki J."/>
            <person name="Kanehisa M."/>
            <person name="Yamashita A."/>
            <person name="Oshima K."/>
            <person name="Furuya K."/>
            <person name="Yoshino C."/>
            <person name="Shiba T."/>
            <person name="Hattori M."/>
            <person name="Ogasawara N."/>
            <person name="Hayashi H."/>
            <person name="Hiramatsu K."/>
        </authorList>
    </citation>
    <scope>NUCLEOTIDE SEQUENCE [LARGE SCALE GENOMIC DNA]</scope>
    <source>
        <strain>N315</strain>
    </source>
</reference>
<reference key="2">
    <citation type="submission" date="2007-10" db="UniProtKB">
        <title>Shotgun proteomic analysis of total and membrane protein extracts of S. aureus strain N315.</title>
        <authorList>
            <person name="Vaezzadeh A.R."/>
            <person name="Deshusses J."/>
            <person name="Lescuyer P."/>
            <person name="Hochstrasser D.F."/>
        </authorList>
    </citation>
    <scope>IDENTIFICATION BY MASS SPECTROMETRY [LARGE SCALE ANALYSIS]</scope>
    <source>
        <strain>N315</strain>
    </source>
</reference>
<comment type="function">
    <text evidence="1">SbcCD cleaves DNA hairpin structures. These structures can inhibit DNA replication and are intermediates in certain DNA recombination reactions. The complex acts as a 3'-&gt;5' double strand exonuclease that can open hairpins. It also has a 5' single-strand endonuclease activity (By similarity).</text>
</comment>
<comment type="subunit">
    <text evidence="1">Heterodimer of SbcC and SbcD.</text>
</comment>
<comment type="similarity">
    <text evidence="3">Belongs to the SMC family. SbcC subfamily.</text>
</comment>
<organism>
    <name type="scientific">Staphylococcus aureus (strain N315)</name>
    <dbReference type="NCBI Taxonomy" id="158879"/>
    <lineage>
        <taxon>Bacteria</taxon>
        <taxon>Bacillati</taxon>
        <taxon>Bacillota</taxon>
        <taxon>Bacilli</taxon>
        <taxon>Bacillales</taxon>
        <taxon>Staphylococcaceae</taxon>
        <taxon>Staphylococcus</taxon>
    </lineage>
</organism>
<feature type="chain" id="PRO_0000338469" description="Nuclease SbcCD subunit C">
    <location>
        <begin position="1"/>
        <end position="1009"/>
    </location>
</feature>
<feature type="coiled-coil region" evidence="2">
    <location>
        <begin position="176"/>
        <end position="364"/>
    </location>
</feature>
<feature type="coiled-coil region" evidence="2">
    <location>
        <begin position="401"/>
        <end position="501"/>
    </location>
</feature>
<feature type="coiled-coil region" evidence="2">
    <location>
        <begin position="535"/>
        <end position="805"/>
    </location>
</feature>
<feature type="binding site" evidence="2">
    <location>
        <begin position="34"/>
        <end position="41"/>
    </location>
    <ligand>
        <name>ATP</name>
        <dbReference type="ChEBI" id="CHEBI:30616"/>
    </ligand>
</feature>
<name>SBCC_STAAN</name>
<sequence>MKPLHLKLNNFGPFLKEEIDFSKIDNNELFLISGKTGSGKTMIFDAMTYALFGKASTEQREENDLRSHFADGKQPMSVTFEFQLNHRIYKVHRQGPYIKEGNTTKTNAKFDVFEMVDGKYEIRESKVISGTQFIIELLGVNADQFRQLFILPQGEFKRFLISNSREKQGILRTLFDSEKFEAIREILKEELKKEKAQIENRYQQIDLLWQEIESFDDDKIKGLLELATQQIDKLIENIPLLQARSKEILAFVNESKETAIKEYEIIEKKTLENNILKDNINQLNKNKIDFVQLKEQQPEIDEIEAKLKLLQDITNLLNYIENREKIETKIANSKKDISKTNNKILNLDCDKRNIDKEKKMLEENGDLIESKTSFIDKTRVLFNDINKYQQSYLNIECLITEGEQLGDELNNLIKGLEKVEDSIGNNESDYEKIIELNNAITNINNEINIIKENEKAKAELDKLLGSKQELENQINEETTIMKNLEIKLDHYDKSKLDLNDKESFISEIKSAVKIGDQCPICGNEIQDLGHHIDFDSIAKRQNEIKEIEANIHAIKSNIAVHNSEIKFVNEKISNINIKTQSDFSLEVLNKRLLENENALNNQRDLNKFIEQMKEEKDNLTLQIHNKQLRLNKNESELKLCRDLITEFETLSKYNNITNFEVDYKKYVQDVNQHQELSKEIEDKLMQLSQRKLIEQNNLNHYENQLETYNNDLELNEQSIEMEMSRLNLTDDNDINEIIAWRGEQEELEQKRDTYKKRYHEFEMEIARLESLTKDKELLDSDKLKDEYEQKKEKMNTLIDEYSAVHYQCQNNINKTQSIVSHINYLNQELKDQQEIFQLAEIVSGKNNKNLTLENFVLIYYLDQIIAQANLRLATMSDNRYQLIRREAVSHGLSGLEIDVFDLHSNKSRHISSLSGGETFQSSLALALGLSEIVQQQSGGISLESIFIDEGFGTLDQETLETALDTLLNLKSTGRMVGIISHVSELKNRIPLVLEVKSDQYQSSTRFKRN</sequence>
<keyword id="KW-0067">ATP-binding</keyword>
<keyword id="KW-0175">Coiled coil</keyword>
<keyword id="KW-0233">DNA recombination</keyword>
<keyword id="KW-0235">DNA replication</keyword>
<keyword id="KW-0255">Endonuclease</keyword>
<keyword id="KW-0269">Exonuclease</keyword>
<keyword id="KW-0378">Hydrolase</keyword>
<keyword id="KW-0540">Nuclease</keyword>
<keyword id="KW-0547">Nucleotide-binding</keyword>
<evidence type="ECO:0000250" key="1"/>
<evidence type="ECO:0000255" key="2"/>
<evidence type="ECO:0000305" key="3"/>
<gene>
    <name type="primary">sbcC</name>
    <name type="ordered locus">SA1181</name>
</gene>
<accession>Q7A5S6</accession>